<reference key="1">
    <citation type="journal article" date="2000" name="Science">
        <title>The genome sequence of Drosophila melanogaster.</title>
        <authorList>
            <person name="Adams M.D."/>
            <person name="Celniker S.E."/>
            <person name="Holt R.A."/>
            <person name="Evans C.A."/>
            <person name="Gocayne J.D."/>
            <person name="Amanatides P.G."/>
            <person name="Scherer S.E."/>
            <person name="Li P.W."/>
            <person name="Hoskins R.A."/>
            <person name="Galle R.F."/>
            <person name="George R.A."/>
            <person name="Lewis S.E."/>
            <person name="Richards S."/>
            <person name="Ashburner M."/>
            <person name="Henderson S.N."/>
            <person name="Sutton G.G."/>
            <person name="Wortman J.R."/>
            <person name="Yandell M.D."/>
            <person name="Zhang Q."/>
            <person name="Chen L.X."/>
            <person name="Brandon R.C."/>
            <person name="Rogers Y.-H.C."/>
            <person name="Blazej R.G."/>
            <person name="Champe M."/>
            <person name="Pfeiffer B.D."/>
            <person name="Wan K.H."/>
            <person name="Doyle C."/>
            <person name="Baxter E.G."/>
            <person name="Helt G."/>
            <person name="Nelson C.R."/>
            <person name="Miklos G.L.G."/>
            <person name="Abril J.F."/>
            <person name="Agbayani A."/>
            <person name="An H.-J."/>
            <person name="Andrews-Pfannkoch C."/>
            <person name="Baldwin D."/>
            <person name="Ballew R.M."/>
            <person name="Basu A."/>
            <person name="Baxendale J."/>
            <person name="Bayraktaroglu L."/>
            <person name="Beasley E.M."/>
            <person name="Beeson K.Y."/>
            <person name="Benos P.V."/>
            <person name="Berman B.P."/>
            <person name="Bhandari D."/>
            <person name="Bolshakov S."/>
            <person name="Borkova D."/>
            <person name="Botchan M.R."/>
            <person name="Bouck J."/>
            <person name="Brokstein P."/>
            <person name="Brottier P."/>
            <person name="Burtis K.C."/>
            <person name="Busam D.A."/>
            <person name="Butler H."/>
            <person name="Cadieu E."/>
            <person name="Center A."/>
            <person name="Chandra I."/>
            <person name="Cherry J.M."/>
            <person name="Cawley S."/>
            <person name="Dahlke C."/>
            <person name="Davenport L.B."/>
            <person name="Davies P."/>
            <person name="de Pablos B."/>
            <person name="Delcher A."/>
            <person name="Deng Z."/>
            <person name="Mays A.D."/>
            <person name="Dew I."/>
            <person name="Dietz S.M."/>
            <person name="Dodson K."/>
            <person name="Doup L.E."/>
            <person name="Downes M."/>
            <person name="Dugan-Rocha S."/>
            <person name="Dunkov B.C."/>
            <person name="Dunn P."/>
            <person name="Durbin K.J."/>
            <person name="Evangelista C.C."/>
            <person name="Ferraz C."/>
            <person name="Ferriera S."/>
            <person name="Fleischmann W."/>
            <person name="Fosler C."/>
            <person name="Gabrielian A.E."/>
            <person name="Garg N.S."/>
            <person name="Gelbart W.M."/>
            <person name="Glasser K."/>
            <person name="Glodek A."/>
            <person name="Gong F."/>
            <person name="Gorrell J.H."/>
            <person name="Gu Z."/>
            <person name="Guan P."/>
            <person name="Harris M."/>
            <person name="Harris N.L."/>
            <person name="Harvey D.A."/>
            <person name="Heiman T.J."/>
            <person name="Hernandez J.R."/>
            <person name="Houck J."/>
            <person name="Hostin D."/>
            <person name="Houston K.A."/>
            <person name="Howland T.J."/>
            <person name="Wei M.-H."/>
            <person name="Ibegwam C."/>
            <person name="Jalali M."/>
            <person name="Kalush F."/>
            <person name="Karpen G.H."/>
            <person name="Ke Z."/>
            <person name="Kennison J.A."/>
            <person name="Ketchum K.A."/>
            <person name="Kimmel B.E."/>
            <person name="Kodira C.D."/>
            <person name="Kraft C.L."/>
            <person name="Kravitz S."/>
            <person name="Kulp D."/>
            <person name="Lai Z."/>
            <person name="Lasko P."/>
            <person name="Lei Y."/>
            <person name="Levitsky A.A."/>
            <person name="Li J.H."/>
            <person name="Li Z."/>
            <person name="Liang Y."/>
            <person name="Lin X."/>
            <person name="Liu X."/>
            <person name="Mattei B."/>
            <person name="McIntosh T.C."/>
            <person name="McLeod M.P."/>
            <person name="McPherson D."/>
            <person name="Merkulov G."/>
            <person name="Milshina N.V."/>
            <person name="Mobarry C."/>
            <person name="Morris J."/>
            <person name="Moshrefi A."/>
            <person name="Mount S.M."/>
            <person name="Moy M."/>
            <person name="Murphy B."/>
            <person name="Murphy L."/>
            <person name="Muzny D.M."/>
            <person name="Nelson D.L."/>
            <person name="Nelson D.R."/>
            <person name="Nelson K.A."/>
            <person name="Nixon K."/>
            <person name="Nusskern D.R."/>
            <person name="Pacleb J.M."/>
            <person name="Palazzolo M."/>
            <person name="Pittman G.S."/>
            <person name="Pan S."/>
            <person name="Pollard J."/>
            <person name="Puri V."/>
            <person name="Reese M.G."/>
            <person name="Reinert K."/>
            <person name="Remington K."/>
            <person name="Saunders R.D.C."/>
            <person name="Scheeler F."/>
            <person name="Shen H."/>
            <person name="Shue B.C."/>
            <person name="Siden-Kiamos I."/>
            <person name="Simpson M."/>
            <person name="Skupski M.P."/>
            <person name="Smith T.J."/>
            <person name="Spier E."/>
            <person name="Spradling A.C."/>
            <person name="Stapleton M."/>
            <person name="Strong R."/>
            <person name="Sun E."/>
            <person name="Svirskas R."/>
            <person name="Tector C."/>
            <person name="Turner R."/>
            <person name="Venter E."/>
            <person name="Wang A.H."/>
            <person name="Wang X."/>
            <person name="Wang Z.-Y."/>
            <person name="Wassarman D.A."/>
            <person name="Weinstock G.M."/>
            <person name="Weissenbach J."/>
            <person name="Williams S.M."/>
            <person name="Woodage T."/>
            <person name="Worley K.C."/>
            <person name="Wu D."/>
            <person name="Yang S."/>
            <person name="Yao Q.A."/>
            <person name="Ye J."/>
            <person name="Yeh R.-F."/>
            <person name="Zaveri J.S."/>
            <person name="Zhan M."/>
            <person name="Zhang G."/>
            <person name="Zhao Q."/>
            <person name="Zheng L."/>
            <person name="Zheng X.H."/>
            <person name="Zhong F.N."/>
            <person name="Zhong W."/>
            <person name="Zhou X."/>
            <person name="Zhu S.C."/>
            <person name="Zhu X."/>
            <person name="Smith H.O."/>
            <person name="Gibbs R.A."/>
            <person name="Myers E.W."/>
            <person name="Rubin G.M."/>
            <person name="Venter J.C."/>
        </authorList>
    </citation>
    <scope>NUCLEOTIDE SEQUENCE [LARGE SCALE GENOMIC DNA]</scope>
    <source>
        <strain>Berkeley</strain>
    </source>
</reference>
<reference key="2">
    <citation type="journal article" date="2002" name="Genome Biol.">
        <title>Annotation of the Drosophila melanogaster euchromatic genome: a systematic review.</title>
        <authorList>
            <person name="Misra S."/>
            <person name="Crosby M.A."/>
            <person name="Mungall C.J."/>
            <person name="Matthews B.B."/>
            <person name="Campbell K.S."/>
            <person name="Hradecky P."/>
            <person name="Huang Y."/>
            <person name="Kaminker J.S."/>
            <person name="Millburn G.H."/>
            <person name="Prochnik S.E."/>
            <person name="Smith C.D."/>
            <person name="Tupy J.L."/>
            <person name="Whitfield E.J."/>
            <person name="Bayraktaroglu L."/>
            <person name="Berman B.P."/>
            <person name="Bettencourt B.R."/>
            <person name="Celniker S.E."/>
            <person name="de Grey A.D.N.J."/>
            <person name="Drysdale R.A."/>
            <person name="Harris N.L."/>
            <person name="Richter J."/>
            <person name="Russo S."/>
            <person name="Schroeder A.J."/>
            <person name="Shu S.Q."/>
            <person name="Stapleton M."/>
            <person name="Yamada C."/>
            <person name="Ashburner M."/>
            <person name="Gelbart W.M."/>
            <person name="Rubin G.M."/>
            <person name="Lewis S.E."/>
        </authorList>
    </citation>
    <scope>GENOME REANNOTATION</scope>
    <scope>ALTERNATIVE SPLICING</scope>
    <source>
        <strain>Berkeley</strain>
    </source>
</reference>
<reference key="3">
    <citation type="journal article" date="2002" name="Genome Biol.">
        <title>A Drosophila full-length cDNA resource.</title>
        <authorList>
            <person name="Stapleton M."/>
            <person name="Carlson J.W."/>
            <person name="Brokstein P."/>
            <person name="Yu C."/>
            <person name="Champe M."/>
            <person name="George R.A."/>
            <person name="Guarin H."/>
            <person name="Kronmiller B."/>
            <person name="Pacleb J.M."/>
            <person name="Park S."/>
            <person name="Wan K.H."/>
            <person name="Rubin G.M."/>
            <person name="Celniker S.E."/>
        </authorList>
    </citation>
    <scope>NUCLEOTIDE SEQUENCE [LARGE SCALE MRNA] (ISOFORM B)</scope>
    <source>
        <strain>Berkeley</strain>
        <tissue>Embryo</tissue>
    </source>
</reference>
<reference key="4">
    <citation type="journal article" date="2007" name="Mol. Biosyst.">
        <title>An integrated chemical, mass spectrometric and computational strategy for (quantitative) phosphoproteomics: application to Drosophila melanogaster Kc167 cells.</title>
        <authorList>
            <person name="Bodenmiller B."/>
            <person name="Mueller L.N."/>
            <person name="Pedrioli P.G.A."/>
            <person name="Pflieger D."/>
            <person name="Juenger M.A."/>
            <person name="Eng J.K."/>
            <person name="Aebersold R."/>
            <person name="Tao W.A."/>
        </authorList>
    </citation>
    <scope>PHOSPHORYLATION [LARGE SCALE ANALYSIS] AT SER-89</scope>
    <scope>IDENTIFICATION BY MASS SPECTROMETRY</scope>
</reference>
<reference key="5">
    <citation type="journal article" date="2008" name="J. Proteome Res.">
        <title>Phosphoproteome analysis of Drosophila melanogaster embryos.</title>
        <authorList>
            <person name="Zhai B."/>
            <person name="Villen J."/>
            <person name="Beausoleil S.A."/>
            <person name="Mintseris J."/>
            <person name="Gygi S.P."/>
        </authorList>
    </citation>
    <scope>PHOSPHORYLATION [LARGE SCALE ANALYSIS] AT SER-37; SER-53; SER-137 AND SER-139</scope>
    <scope>IDENTIFICATION BY MASS SPECTROMETRY</scope>
    <source>
        <tissue>Embryo</tissue>
    </source>
</reference>
<protein>
    <recommendedName>
        <fullName>Probable elongation factor 1-delta</fullName>
        <shortName>EF-1-delta</shortName>
    </recommendedName>
</protein>
<comment type="function">
    <text evidence="1">EF-1-beta and EF-1-delta stimulate the exchange of GDP bound to EF-1-alpha to GTP.</text>
</comment>
<comment type="subunit">
    <text evidence="1">EF-1 is composed of 4 subunits: alpha, beta, delta, and gamma.</text>
</comment>
<comment type="alternative products">
    <event type="alternative splicing"/>
    <isoform>
        <id>Q9VL18-1</id>
        <name>B</name>
        <sequence type="displayed"/>
    </isoform>
    <isoform>
        <id>Q9VL18-2</id>
        <name>A</name>
        <sequence type="described" ref="VSP_001360"/>
    </isoform>
</comment>
<comment type="similarity">
    <text evidence="5">Belongs to the EF-1-beta/EF-1-delta family.</text>
</comment>
<comment type="sequence caution" evidence="5">
    <conflict type="erroneous initiation">
        <sequence resource="EMBL-CDS" id="AAO25038"/>
    </conflict>
</comment>
<proteinExistence type="evidence at protein level"/>
<gene>
    <name type="primary">eEF1delta</name>
    <name type="ORF">CG4912</name>
</gene>
<dbReference type="EMBL" id="AE014134">
    <property type="protein sequence ID" value="AAF52879.1"/>
    <property type="molecule type" value="Genomic_DNA"/>
</dbReference>
<dbReference type="EMBL" id="AE014134">
    <property type="protein sequence ID" value="AAF52880.1"/>
    <property type="molecule type" value="Genomic_DNA"/>
</dbReference>
<dbReference type="EMBL" id="BT003281">
    <property type="protein sequence ID" value="AAO25038.1"/>
    <property type="status" value="ALT_INIT"/>
    <property type="molecule type" value="mRNA"/>
</dbReference>
<dbReference type="RefSeq" id="NP_609361.1">
    <molecule id="Q9VL18-1"/>
    <property type="nucleotide sequence ID" value="NM_135517.4"/>
</dbReference>
<dbReference type="RefSeq" id="NP_723536.1">
    <molecule id="Q9VL18-2"/>
    <property type="nucleotide sequence ID" value="NM_164895.3"/>
</dbReference>
<dbReference type="SMR" id="Q9VL18"/>
<dbReference type="BioGRID" id="60454">
    <property type="interactions" value="45"/>
</dbReference>
<dbReference type="DIP" id="DIP-18823N"/>
<dbReference type="FunCoup" id="Q9VL18">
    <property type="interactions" value="171"/>
</dbReference>
<dbReference type="IntAct" id="Q9VL18">
    <property type="interactions" value="162"/>
</dbReference>
<dbReference type="STRING" id="7227.FBpp0079542"/>
<dbReference type="iPTMnet" id="Q9VL18"/>
<dbReference type="PaxDb" id="7227-FBpp0079542"/>
<dbReference type="DNASU" id="34363"/>
<dbReference type="EnsemblMetazoa" id="FBtr0079951">
    <molecule id="Q9VL18-2"/>
    <property type="protein sequence ID" value="FBpp0079541"/>
    <property type="gene ID" value="FBgn0032198"/>
</dbReference>
<dbReference type="EnsemblMetazoa" id="FBtr0079952">
    <molecule id="Q9VL18-1"/>
    <property type="protein sequence ID" value="FBpp0079542"/>
    <property type="gene ID" value="FBgn0032198"/>
</dbReference>
<dbReference type="GeneID" id="34363"/>
<dbReference type="KEGG" id="dme:Dmel_CG4912"/>
<dbReference type="UCSC" id="CG4912-RA">
    <molecule id="Q9VL18-1"/>
    <property type="organism name" value="d. melanogaster"/>
</dbReference>
<dbReference type="AGR" id="FB:FBgn0032198"/>
<dbReference type="CTD" id="34363"/>
<dbReference type="FlyBase" id="FBgn0032198">
    <property type="gene designation" value="eEF1delta"/>
</dbReference>
<dbReference type="VEuPathDB" id="VectorBase:FBgn0032198"/>
<dbReference type="eggNOG" id="KOG1668">
    <property type="taxonomic scope" value="Eukaryota"/>
</dbReference>
<dbReference type="GeneTree" id="ENSGT00950000183014"/>
<dbReference type="InParanoid" id="Q9VL18"/>
<dbReference type="OMA" id="QKITISC"/>
<dbReference type="OrthoDB" id="331763at2759"/>
<dbReference type="PhylomeDB" id="Q9VL18"/>
<dbReference type="Reactome" id="R-DME-156842">
    <property type="pathway name" value="Eukaryotic Translation Elongation"/>
</dbReference>
<dbReference type="SignaLink" id="Q9VL18"/>
<dbReference type="BioGRID-ORCS" id="34363">
    <property type="hits" value="0 hits in 1 CRISPR screen"/>
</dbReference>
<dbReference type="GenomeRNAi" id="34363"/>
<dbReference type="PRO" id="PR:Q9VL18"/>
<dbReference type="Proteomes" id="UP000000803">
    <property type="component" value="Chromosome 2L"/>
</dbReference>
<dbReference type="Bgee" id="FBgn0032198">
    <property type="expression patterns" value="Expressed in eye disc (Drosophila) and 232 other cell types or tissues"/>
</dbReference>
<dbReference type="GO" id="GO:0005829">
    <property type="term" value="C:cytosol"/>
    <property type="evidence" value="ECO:0000318"/>
    <property type="project" value="GO_Central"/>
</dbReference>
<dbReference type="GO" id="GO:0005853">
    <property type="term" value="C:eukaryotic translation elongation factor 1 complex"/>
    <property type="evidence" value="ECO:0000250"/>
    <property type="project" value="FlyBase"/>
</dbReference>
<dbReference type="GO" id="GO:0005085">
    <property type="term" value="F:guanyl-nucleotide exchange factor activity"/>
    <property type="evidence" value="ECO:0000318"/>
    <property type="project" value="GO_Central"/>
</dbReference>
<dbReference type="GO" id="GO:0003746">
    <property type="term" value="F:translation elongation factor activity"/>
    <property type="evidence" value="ECO:0000250"/>
    <property type="project" value="FlyBase"/>
</dbReference>
<dbReference type="GO" id="GO:0006414">
    <property type="term" value="P:translational elongation"/>
    <property type="evidence" value="ECO:0000250"/>
    <property type="project" value="FlyBase"/>
</dbReference>
<dbReference type="CDD" id="cd00292">
    <property type="entry name" value="EF1B"/>
    <property type="match status" value="1"/>
</dbReference>
<dbReference type="FunFam" id="3.30.70.60:FF:000001">
    <property type="entry name" value="Elongation factor 1-beta 1 like"/>
    <property type="match status" value="1"/>
</dbReference>
<dbReference type="Gene3D" id="3.30.70.60">
    <property type="match status" value="1"/>
</dbReference>
<dbReference type="InterPro" id="IPR036219">
    <property type="entry name" value="eEF-1beta-like_sf"/>
</dbReference>
<dbReference type="InterPro" id="IPR018940">
    <property type="entry name" value="EF-1_beta_acid_region_euk"/>
</dbReference>
<dbReference type="InterPro" id="IPR049720">
    <property type="entry name" value="EF1B_bsu/dsu"/>
</dbReference>
<dbReference type="InterPro" id="IPR014038">
    <property type="entry name" value="EF1B_bsu/dsu_GNE"/>
</dbReference>
<dbReference type="InterPro" id="IPR014717">
    <property type="entry name" value="Transl_elong_EF1B/ribsomal_bS6"/>
</dbReference>
<dbReference type="InterPro" id="IPR001326">
    <property type="entry name" value="Transl_elong_EF1B_B/D_CS"/>
</dbReference>
<dbReference type="PANTHER" id="PTHR11595">
    <property type="entry name" value="EF-HAND AND COILED-COIL DOMAIN-CONTAINING FAMILY MEMBER"/>
    <property type="match status" value="1"/>
</dbReference>
<dbReference type="PANTHER" id="PTHR11595:SF26">
    <property type="entry name" value="ELONGATION FACTOR 1-DELTA"/>
    <property type="match status" value="1"/>
</dbReference>
<dbReference type="Pfam" id="PF10587">
    <property type="entry name" value="EF-1_beta_acid"/>
    <property type="match status" value="1"/>
</dbReference>
<dbReference type="Pfam" id="PF00736">
    <property type="entry name" value="EF1_GNE"/>
    <property type="match status" value="1"/>
</dbReference>
<dbReference type="SMART" id="SM01182">
    <property type="entry name" value="EF-1_beta_acid"/>
    <property type="match status" value="1"/>
</dbReference>
<dbReference type="SMART" id="SM00888">
    <property type="entry name" value="EF1_GNE"/>
    <property type="match status" value="1"/>
</dbReference>
<dbReference type="SUPFAM" id="SSF54984">
    <property type="entry name" value="eEF-1beta-like"/>
    <property type="match status" value="1"/>
</dbReference>
<dbReference type="PROSITE" id="PS00824">
    <property type="entry name" value="EF1BD_1"/>
    <property type="match status" value="1"/>
</dbReference>
<dbReference type="PROSITE" id="PS00825">
    <property type="entry name" value="EF1BD_2"/>
    <property type="match status" value="1"/>
</dbReference>
<sequence>MKVEALDKFWADKSRYDLAEKRFYEGPQKVTDRSHYSPLVSEIAKAREHIQNSLEKIDGVTLDDGLNSELAKRLAQLEGEHKELKTQVSLLNELLTATVKRLETQLKLTNGVSKEPEVEAKKPEANDDDDDVDLFGSDSEEEDGEAARIREERLAAYAAKKAKKVQIIAKSNIILDVKPWDDETDLKVMETEIRKITQDGLLWGASKFVPVAFGIQKLSISCVVEDDKVSIDWLTEEIEKLEDFVQSVDIAAFNKI</sequence>
<name>EF1D_DROME</name>
<organism>
    <name type="scientific">Drosophila melanogaster</name>
    <name type="common">Fruit fly</name>
    <dbReference type="NCBI Taxonomy" id="7227"/>
    <lineage>
        <taxon>Eukaryota</taxon>
        <taxon>Metazoa</taxon>
        <taxon>Ecdysozoa</taxon>
        <taxon>Arthropoda</taxon>
        <taxon>Hexapoda</taxon>
        <taxon>Insecta</taxon>
        <taxon>Pterygota</taxon>
        <taxon>Neoptera</taxon>
        <taxon>Endopterygota</taxon>
        <taxon>Diptera</taxon>
        <taxon>Brachycera</taxon>
        <taxon>Muscomorpha</taxon>
        <taxon>Ephydroidea</taxon>
        <taxon>Drosophilidae</taxon>
        <taxon>Drosophila</taxon>
        <taxon>Sophophora</taxon>
    </lineage>
</organism>
<feature type="chain" id="PRO_0000155051" description="Probable elongation factor 1-delta">
    <location>
        <begin position="1"/>
        <end position="256"/>
    </location>
</feature>
<feature type="region of interest" description="Disordered" evidence="2">
    <location>
        <begin position="110"/>
        <end position="146"/>
    </location>
</feature>
<feature type="compositionally biased region" description="Basic and acidic residues" evidence="2">
    <location>
        <begin position="114"/>
        <end position="125"/>
    </location>
</feature>
<feature type="compositionally biased region" description="Acidic residues" evidence="2">
    <location>
        <begin position="126"/>
        <end position="144"/>
    </location>
</feature>
<feature type="modified residue" description="Phosphoserine" evidence="4">
    <location>
        <position position="37"/>
    </location>
</feature>
<feature type="modified residue" description="Phosphoserine" evidence="4">
    <location>
        <position position="53"/>
    </location>
</feature>
<feature type="modified residue" description="Phosphoserine" evidence="3">
    <location>
        <position position="89"/>
    </location>
</feature>
<feature type="modified residue" description="Phosphoserine" evidence="4">
    <location>
        <position position="137"/>
    </location>
</feature>
<feature type="modified residue" description="Phosphoserine" evidence="4">
    <location>
        <position position="139"/>
    </location>
</feature>
<feature type="splice variant" id="VSP_001360" description="In isoform A." evidence="5">
    <location>
        <begin position="29"/>
        <end position="55"/>
    </location>
</feature>
<evidence type="ECO:0000250" key="1"/>
<evidence type="ECO:0000256" key="2">
    <source>
        <dbReference type="SAM" id="MobiDB-lite"/>
    </source>
</evidence>
<evidence type="ECO:0000269" key="3">
    <source>
    </source>
</evidence>
<evidence type="ECO:0000269" key="4">
    <source>
    </source>
</evidence>
<evidence type="ECO:0000305" key="5"/>
<accession>Q9VL18</accession>
<accession>Q9VL19</accession>
<keyword id="KW-0025">Alternative splicing</keyword>
<keyword id="KW-0251">Elongation factor</keyword>
<keyword id="KW-0597">Phosphoprotein</keyword>
<keyword id="KW-0648">Protein biosynthesis</keyword>
<keyword id="KW-1185">Reference proteome</keyword>